<name>COQ8_SCHPO</name>
<protein>
    <recommendedName>
        <fullName>Atypical kinase COQ8, mitochondrial</fullName>
        <ecNumber evidence="1">2.7.-.-</ecNumber>
    </recommendedName>
    <alternativeName>
        <fullName evidence="6">Activity of bc1 complex protein 1</fullName>
    </alternativeName>
    <alternativeName>
        <fullName>Coenzyme Q protein 8</fullName>
    </alternativeName>
    <alternativeName>
        <fullName>Ubiquinone biosynthesis protein coq8</fullName>
    </alternativeName>
</protein>
<organism>
    <name type="scientific">Schizosaccharomyces pombe (strain 972 / ATCC 24843)</name>
    <name type="common">Fission yeast</name>
    <dbReference type="NCBI Taxonomy" id="284812"/>
    <lineage>
        <taxon>Eukaryota</taxon>
        <taxon>Fungi</taxon>
        <taxon>Dikarya</taxon>
        <taxon>Ascomycota</taxon>
        <taxon>Taphrinomycotina</taxon>
        <taxon>Schizosaccharomycetes</taxon>
        <taxon>Schizosaccharomycetales</taxon>
        <taxon>Schizosaccharomycetaceae</taxon>
        <taxon>Schizosaccharomyces</taxon>
    </lineage>
</organism>
<gene>
    <name evidence="8" type="primary">coq8</name>
    <name evidence="6" type="synonym">abc1</name>
    <name type="ORF">SPBC2D10.18</name>
</gene>
<accession>Q92338</accession>
<keyword id="KW-0067">ATP-binding</keyword>
<keyword id="KW-0143">Chaperone</keyword>
<keyword id="KW-0418">Kinase</keyword>
<keyword id="KW-0496">Mitochondrion</keyword>
<keyword id="KW-0547">Nucleotide-binding</keyword>
<keyword id="KW-1185">Reference proteome</keyword>
<keyword id="KW-0808">Transferase</keyword>
<keyword id="KW-0809">Transit peptide</keyword>
<proteinExistence type="evidence at transcript level"/>
<evidence type="ECO:0000250" key="1">
    <source>
        <dbReference type="UniProtKB" id="Q8NI60"/>
    </source>
</evidence>
<evidence type="ECO:0000250" key="2">
    <source>
        <dbReference type="UniProtKB" id="Q96D53"/>
    </source>
</evidence>
<evidence type="ECO:0000255" key="3"/>
<evidence type="ECO:0000256" key="4">
    <source>
        <dbReference type="SAM" id="MobiDB-lite"/>
    </source>
</evidence>
<evidence type="ECO:0000269" key="5">
    <source>
    </source>
</evidence>
<evidence type="ECO:0000303" key="6">
    <source>
    </source>
</evidence>
<evidence type="ECO:0000305" key="7"/>
<evidence type="ECO:0000312" key="8">
    <source>
        <dbReference type="PomBase" id="SPBC2D10.18"/>
    </source>
</evidence>
<reference key="1">
    <citation type="journal article" date="1996" name="Mol. Gen. Genet.">
        <title>Cloning by functional complementation, and inactivation, of the Schizosaccharomyces pombe homologue of the Saccharomyces cerevisiae gene ABC1.</title>
        <authorList>
            <person name="Bonnefoy N."/>
            <person name="Kermorgant M."/>
            <person name="Brivet-Chevillotte P."/>
            <person name="Dujardin G."/>
        </authorList>
    </citation>
    <scope>NUCLEOTIDE SEQUENCE [MRNA]</scope>
</reference>
<reference key="2">
    <citation type="journal article" date="2002" name="Nature">
        <title>The genome sequence of Schizosaccharomyces pombe.</title>
        <authorList>
            <person name="Wood V."/>
            <person name="Gwilliam R."/>
            <person name="Rajandream M.A."/>
            <person name="Lyne M.H."/>
            <person name="Lyne R."/>
            <person name="Stewart A."/>
            <person name="Sgouros J.G."/>
            <person name="Peat N."/>
            <person name="Hayles J."/>
            <person name="Baker S.G."/>
            <person name="Basham D."/>
            <person name="Bowman S."/>
            <person name="Brooks K."/>
            <person name="Brown D."/>
            <person name="Brown S."/>
            <person name="Chillingworth T."/>
            <person name="Churcher C.M."/>
            <person name="Collins M."/>
            <person name="Connor R."/>
            <person name="Cronin A."/>
            <person name="Davis P."/>
            <person name="Feltwell T."/>
            <person name="Fraser A."/>
            <person name="Gentles S."/>
            <person name="Goble A."/>
            <person name="Hamlin N."/>
            <person name="Harris D.E."/>
            <person name="Hidalgo J."/>
            <person name="Hodgson G."/>
            <person name="Holroyd S."/>
            <person name="Hornsby T."/>
            <person name="Howarth S."/>
            <person name="Huckle E.J."/>
            <person name="Hunt S."/>
            <person name="Jagels K."/>
            <person name="James K.D."/>
            <person name="Jones L."/>
            <person name="Jones M."/>
            <person name="Leather S."/>
            <person name="McDonald S."/>
            <person name="McLean J."/>
            <person name="Mooney P."/>
            <person name="Moule S."/>
            <person name="Mungall K.L."/>
            <person name="Murphy L.D."/>
            <person name="Niblett D."/>
            <person name="Odell C."/>
            <person name="Oliver K."/>
            <person name="O'Neil S."/>
            <person name="Pearson D."/>
            <person name="Quail M.A."/>
            <person name="Rabbinowitsch E."/>
            <person name="Rutherford K.M."/>
            <person name="Rutter S."/>
            <person name="Saunders D."/>
            <person name="Seeger K."/>
            <person name="Sharp S."/>
            <person name="Skelton J."/>
            <person name="Simmonds M.N."/>
            <person name="Squares R."/>
            <person name="Squares S."/>
            <person name="Stevens K."/>
            <person name="Taylor K."/>
            <person name="Taylor R.G."/>
            <person name="Tivey A."/>
            <person name="Walsh S.V."/>
            <person name="Warren T."/>
            <person name="Whitehead S."/>
            <person name="Woodward J.R."/>
            <person name="Volckaert G."/>
            <person name="Aert R."/>
            <person name="Robben J."/>
            <person name="Grymonprez B."/>
            <person name="Weltjens I."/>
            <person name="Vanstreels E."/>
            <person name="Rieger M."/>
            <person name="Schaefer M."/>
            <person name="Mueller-Auer S."/>
            <person name="Gabel C."/>
            <person name="Fuchs M."/>
            <person name="Duesterhoeft A."/>
            <person name="Fritzc C."/>
            <person name="Holzer E."/>
            <person name="Moestl D."/>
            <person name="Hilbert H."/>
            <person name="Borzym K."/>
            <person name="Langer I."/>
            <person name="Beck A."/>
            <person name="Lehrach H."/>
            <person name="Reinhardt R."/>
            <person name="Pohl T.M."/>
            <person name="Eger P."/>
            <person name="Zimmermann W."/>
            <person name="Wedler H."/>
            <person name="Wambutt R."/>
            <person name="Purnelle B."/>
            <person name="Goffeau A."/>
            <person name="Cadieu E."/>
            <person name="Dreano S."/>
            <person name="Gloux S."/>
            <person name="Lelaure V."/>
            <person name="Mottier S."/>
            <person name="Galibert F."/>
            <person name="Aves S.J."/>
            <person name="Xiang Z."/>
            <person name="Hunt C."/>
            <person name="Moore K."/>
            <person name="Hurst S.M."/>
            <person name="Lucas M."/>
            <person name="Rochet M."/>
            <person name="Gaillardin C."/>
            <person name="Tallada V.A."/>
            <person name="Garzon A."/>
            <person name="Thode G."/>
            <person name="Daga R.R."/>
            <person name="Cruzado L."/>
            <person name="Jimenez J."/>
            <person name="Sanchez M."/>
            <person name="del Rey F."/>
            <person name="Benito J."/>
            <person name="Dominguez A."/>
            <person name="Revuelta J.L."/>
            <person name="Moreno S."/>
            <person name="Armstrong J."/>
            <person name="Forsburg S.L."/>
            <person name="Cerutti L."/>
            <person name="Lowe T."/>
            <person name="McCombie W.R."/>
            <person name="Paulsen I."/>
            <person name="Potashkin J."/>
            <person name="Shpakovski G.V."/>
            <person name="Ussery D."/>
            <person name="Barrell B.G."/>
            <person name="Nurse P."/>
        </authorList>
    </citation>
    <scope>NUCLEOTIDE SEQUENCE [LARGE SCALE GENOMIC DNA]</scope>
    <source>
        <strain>972 / ATCC 24843</strain>
    </source>
</reference>
<reference key="3">
    <citation type="journal article" date="2014" name="PLoS ONE">
        <title>Functional conservation of coenzyme Q biosynthetic genes among yeasts, plants, and humans.</title>
        <authorList>
            <person name="Hayashi K."/>
            <person name="Ogiyama Y."/>
            <person name="Yokomi K."/>
            <person name="Nakagawa T."/>
            <person name="Kaino T."/>
            <person name="Kawamukai M."/>
        </authorList>
    </citation>
    <scope>SUBCELLULAR LOCATION</scope>
    <scope>PATHWAY</scope>
</reference>
<comment type="function">
    <text evidence="1 2">Atypical kinase involved in the biosynthesis of coenzyme Q, also named ubiquinone, an essential lipid-soluble electron transporter for aerobic cellular respiration (By similarity). Its substrate specificity is still unclear: may act as a protein kinase that mediates phosphorylation of coq3 (By similarity). According to other reports, acts as a small molecule kinase, possibly a lipid kinase that phosphorylates a prenyl lipid in the ubiquinone biosynthesis pathway, as suggested by its ability to bind coenzyme Q lipid intermediates (By similarity).</text>
</comment>
<comment type="pathway">
    <text evidence="5">Cofactor biosynthesis; ubiquinone biosynthesis.</text>
</comment>
<comment type="subcellular location">
    <subcellularLocation>
        <location evidence="5">Mitochondrion</location>
    </subcellularLocation>
</comment>
<comment type="similarity">
    <text evidence="7">Belongs to the protein kinase superfamily. ADCK protein kinase family.</text>
</comment>
<sequence length="610" mass="68567">MANSGLWELITIGSAVRNVAKSYLKAEASSITAKQLYDASKITSSKRSTSDLHVQLLEKYRNGKVKHASQIKELGLSSKDTKRTLLGNSLDVQKDASGVKHLQEQSSKEIKNPISQPILPNKKDEISPAKPSAIDSSIKDVTKSHPATNANFTADFESSIEESYSTENKSPVILSSSKVPSSQWSRLWHYGGLATSLSVGAIGEKMKRMWGISKDDGALLLNERNVEILVNKLTQMRGAALKMGQMLSFQDSKLIDPRVSQILERVRDGAHSMPEKQLEQVMVKNLGKNWMTHYSEFDRKPMAAASIGQVHRARLASNHMEVVVKVQYPGVMSSIDSDLNNLAYLLKASRILPKGLFLENSLAAARKELKWECDYEREAAFAERFGSLLKNDSDFKVPMVFREASGPSVITLEYLHGIALGKQKYSQATRNHIGYLLTKQCLREISEYHFMQTDPNWSNFLYNGKTKKIELLDFGASIEYDEKFIKKYCRLLLAAAHRNREKCKKLSVELGYLNNHESAQMIDAHINSIFTLAEPFAFDAPDVYDFGDQTITARVKQQIPVMLDLRLQPPPEETYSLHRRLSGHFLLCAKLGAKVRCKELFSGMLKHYAD</sequence>
<dbReference type="EC" id="2.7.-.-" evidence="1"/>
<dbReference type="EMBL" id="X91616">
    <property type="protein sequence ID" value="CAA62818.1"/>
    <property type="molecule type" value="mRNA"/>
</dbReference>
<dbReference type="EMBL" id="CU329671">
    <property type="protein sequence ID" value="CAA21176.1"/>
    <property type="molecule type" value="Genomic_DNA"/>
</dbReference>
<dbReference type="PIR" id="S71111">
    <property type="entry name" value="S71110"/>
</dbReference>
<dbReference type="RefSeq" id="NP_596237.1">
    <property type="nucleotide sequence ID" value="NM_001022157.2"/>
</dbReference>
<dbReference type="SMR" id="Q92338"/>
<dbReference type="BioGRID" id="276939">
    <property type="interactions" value="3"/>
</dbReference>
<dbReference type="FunCoup" id="Q92338">
    <property type="interactions" value="202"/>
</dbReference>
<dbReference type="STRING" id="284812.Q92338"/>
<dbReference type="PaxDb" id="4896-SPBC2D10.18.1"/>
<dbReference type="EnsemblFungi" id="SPBC2D10.18.1">
    <property type="protein sequence ID" value="SPBC2D10.18.1:pep"/>
    <property type="gene ID" value="SPBC2D10.18"/>
</dbReference>
<dbReference type="GeneID" id="2540411"/>
<dbReference type="KEGG" id="spo:2540411"/>
<dbReference type="PomBase" id="SPBC2D10.18">
    <property type="gene designation" value="coq8"/>
</dbReference>
<dbReference type="VEuPathDB" id="FungiDB:SPBC2D10.18"/>
<dbReference type="eggNOG" id="KOG1234">
    <property type="taxonomic scope" value="Eukaryota"/>
</dbReference>
<dbReference type="HOGENOM" id="CLU_006533_9_2_1"/>
<dbReference type="InParanoid" id="Q92338"/>
<dbReference type="OMA" id="PEYYVPR"/>
<dbReference type="PhylomeDB" id="Q92338"/>
<dbReference type="Reactome" id="R-SPO-2142789">
    <property type="pathway name" value="Ubiquinol biosynthesis"/>
</dbReference>
<dbReference type="UniPathway" id="UPA00232"/>
<dbReference type="PRO" id="PR:Q92338"/>
<dbReference type="Proteomes" id="UP000002485">
    <property type="component" value="Chromosome II"/>
</dbReference>
<dbReference type="GO" id="GO:0031314">
    <property type="term" value="C:extrinsic component of mitochondrial inner membrane"/>
    <property type="evidence" value="ECO:0000266"/>
    <property type="project" value="PomBase"/>
</dbReference>
<dbReference type="GO" id="GO:0005739">
    <property type="term" value="C:mitochondrion"/>
    <property type="evidence" value="ECO:0000314"/>
    <property type="project" value="PomBase"/>
</dbReference>
<dbReference type="GO" id="GO:0016301">
    <property type="term" value="F:kinase activity"/>
    <property type="evidence" value="ECO:0000266"/>
    <property type="project" value="PomBase"/>
</dbReference>
<dbReference type="GO" id="GO:0006744">
    <property type="term" value="P:ubiquinone biosynthetic process"/>
    <property type="evidence" value="ECO:0000315"/>
    <property type="project" value="PomBase"/>
</dbReference>
<dbReference type="CDD" id="cd13970">
    <property type="entry name" value="ABC1_ADCK3"/>
    <property type="match status" value="1"/>
</dbReference>
<dbReference type="InterPro" id="IPR004147">
    <property type="entry name" value="ABC1_dom"/>
</dbReference>
<dbReference type="InterPro" id="IPR034646">
    <property type="entry name" value="ADCK3_dom"/>
</dbReference>
<dbReference type="InterPro" id="IPR051409">
    <property type="entry name" value="Atypical_kinase_ADCK"/>
</dbReference>
<dbReference type="InterPro" id="IPR011009">
    <property type="entry name" value="Kinase-like_dom_sf"/>
</dbReference>
<dbReference type="PANTHER" id="PTHR43851">
    <property type="match status" value="1"/>
</dbReference>
<dbReference type="PANTHER" id="PTHR43851:SF3">
    <property type="entry name" value="COENZYME Q8"/>
    <property type="match status" value="1"/>
</dbReference>
<dbReference type="Pfam" id="PF03109">
    <property type="entry name" value="ABC1"/>
    <property type="match status" value="1"/>
</dbReference>
<dbReference type="SUPFAM" id="SSF56112">
    <property type="entry name" value="Protein kinase-like (PK-like)"/>
    <property type="match status" value="1"/>
</dbReference>
<feature type="transit peptide" description="Mitochondrion" evidence="3">
    <location>
        <begin position="1"/>
        <end status="unknown"/>
    </location>
</feature>
<feature type="chain" id="PRO_0000000261" description="Atypical kinase COQ8, mitochondrial">
    <location>
        <begin status="unknown"/>
        <end position="610"/>
    </location>
</feature>
<feature type="region of interest" description="Disordered" evidence="4">
    <location>
        <begin position="98"/>
        <end position="144"/>
    </location>
</feature>
<feature type="compositionally biased region" description="Basic and acidic residues" evidence="4">
    <location>
        <begin position="98"/>
        <end position="111"/>
    </location>
</feature>